<proteinExistence type="inferred from homology"/>
<protein>
    <recommendedName>
        <fullName evidence="1">Large ribosomal subunit protein uL22</fullName>
    </recommendedName>
    <alternativeName>
        <fullName evidence="2">50S ribosomal protein L22</fullName>
    </alternativeName>
</protein>
<accession>Q14JB5</accession>
<name>RL22_FRAT1</name>
<reference key="1">
    <citation type="journal article" date="2007" name="PLoS ONE">
        <title>Genome sequencing shows that European isolates of Francisella tularensis subspecies tularensis are almost identical to US laboratory strain Schu S4.</title>
        <authorList>
            <person name="Chaudhuri R.R."/>
            <person name="Ren C.-P."/>
            <person name="Desmond L."/>
            <person name="Vincent G.A."/>
            <person name="Silman N.J."/>
            <person name="Brehm J.K."/>
            <person name="Elmore M.J."/>
            <person name="Hudson M.J."/>
            <person name="Forsman M."/>
            <person name="Isherwood K.E."/>
            <person name="Gurycova D."/>
            <person name="Minton N.P."/>
            <person name="Titball R.W."/>
            <person name="Pallen M.J."/>
            <person name="Vipond R."/>
        </authorList>
    </citation>
    <scope>NUCLEOTIDE SEQUENCE [LARGE SCALE GENOMIC DNA]</scope>
    <source>
        <strain>FSC 198</strain>
    </source>
</reference>
<sequence length="111" mass="12201">MEVQAKLKFARISAQKCRLVADQIRGLPVEQAINLLTFSNKKAAVLIKGVLNSAVANAEHNDGMDVDSLVVSTIFVDEGPTMKRFEARAKGRGNRILKRTSHITVKVAEKK</sequence>
<comment type="function">
    <text evidence="1">This protein binds specifically to 23S rRNA; its binding is stimulated by other ribosomal proteins, e.g. L4, L17, and L20. It is important during the early stages of 50S assembly. It makes multiple contacts with different domains of the 23S rRNA in the assembled 50S subunit and ribosome (By similarity).</text>
</comment>
<comment type="function">
    <text evidence="1">The globular domain of the protein is located near the polypeptide exit tunnel on the outside of the subunit, while an extended beta-hairpin is found that lines the wall of the exit tunnel in the center of the 70S ribosome.</text>
</comment>
<comment type="subunit">
    <text evidence="1">Part of the 50S ribosomal subunit.</text>
</comment>
<comment type="similarity">
    <text evidence="1">Belongs to the universal ribosomal protein uL22 family.</text>
</comment>
<gene>
    <name evidence="1" type="primary">rplV</name>
    <name type="ordered locus">FTF0330</name>
</gene>
<organism>
    <name type="scientific">Francisella tularensis subsp. tularensis (strain FSC 198)</name>
    <dbReference type="NCBI Taxonomy" id="393115"/>
    <lineage>
        <taxon>Bacteria</taxon>
        <taxon>Pseudomonadati</taxon>
        <taxon>Pseudomonadota</taxon>
        <taxon>Gammaproteobacteria</taxon>
        <taxon>Thiotrichales</taxon>
        <taxon>Francisellaceae</taxon>
        <taxon>Francisella</taxon>
    </lineage>
</organism>
<dbReference type="EMBL" id="AM286280">
    <property type="protein sequence ID" value="CAL08346.1"/>
    <property type="molecule type" value="Genomic_DNA"/>
</dbReference>
<dbReference type="RefSeq" id="WP_003027193.1">
    <property type="nucleotide sequence ID" value="NC_008245.1"/>
</dbReference>
<dbReference type="SMR" id="Q14JB5"/>
<dbReference type="GeneID" id="75264256"/>
<dbReference type="KEGG" id="ftf:FTF0330"/>
<dbReference type="HOGENOM" id="CLU_083987_3_3_6"/>
<dbReference type="GO" id="GO:0022625">
    <property type="term" value="C:cytosolic large ribosomal subunit"/>
    <property type="evidence" value="ECO:0007669"/>
    <property type="project" value="TreeGrafter"/>
</dbReference>
<dbReference type="GO" id="GO:0019843">
    <property type="term" value="F:rRNA binding"/>
    <property type="evidence" value="ECO:0007669"/>
    <property type="project" value="UniProtKB-UniRule"/>
</dbReference>
<dbReference type="GO" id="GO:0003735">
    <property type="term" value="F:structural constituent of ribosome"/>
    <property type="evidence" value="ECO:0007669"/>
    <property type="project" value="InterPro"/>
</dbReference>
<dbReference type="GO" id="GO:0006412">
    <property type="term" value="P:translation"/>
    <property type="evidence" value="ECO:0007669"/>
    <property type="project" value="UniProtKB-UniRule"/>
</dbReference>
<dbReference type="CDD" id="cd00336">
    <property type="entry name" value="Ribosomal_L22"/>
    <property type="match status" value="1"/>
</dbReference>
<dbReference type="FunFam" id="3.90.470.10:FF:000001">
    <property type="entry name" value="50S ribosomal protein L22"/>
    <property type="match status" value="1"/>
</dbReference>
<dbReference type="Gene3D" id="3.90.470.10">
    <property type="entry name" value="Ribosomal protein L22/L17"/>
    <property type="match status" value="1"/>
</dbReference>
<dbReference type="HAMAP" id="MF_01331_B">
    <property type="entry name" value="Ribosomal_uL22_B"/>
    <property type="match status" value="1"/>
</dbReference>
<dbReference type="InterPro" id="IPR001063">
    <property type="entry name" value="Ribosomal_uL22"/>
</dbReference>
<dbReference type="InterPro" id="IPR005727">
    <property type="entry name" value="Ribosomal_uL22_bac/chlpt-type"/>
</dbReference>
<dbReference type="InterPro" id="IPR047867">
    <property type="entry name" value="Ribosomal_uL22_bac/org-type"/>
</dbReference>
<dbReference type="InterPro" id="IPR018260">
    <property type="entry name" value="Ribosomal_uL22_CS"/>
</dbReference>
<dbReference type="InterPro" id="IPR036394">
    <property type="entry name" value="Ribosomal_uL22_sf"/>
</dbReference>
<dbReference type="NCBIfam" id="TIGR01044">
    <property type="entry name" value="rplV_bact"/>
    <property type="match status" value="1"/>
</dbReference>
<dbReference type="PANTHER" id="PTHR13501">
    <property type="entry name" value="CHLOROPLAST 50S RIBOSOMAL PROTEIN L22-RELATED"/>
    <property type="match status" value="1"/>
</dbReference>
<dbReference type="PANTHER" id="PTHR13501:SF8">
    <property type="entry name" value="LARGE RIBOSOMAL SUBUNIT PROTEIN UL22M"/>
    <property type="match status" value="1"/>
</dbReference>
<dbReference type="Pfam" id="PF00237">
    <property type="entry name" value="Ribosomal_L22"/>
    <property type="match status" value="1"/>
</dbReference>
<dbReference type="SUPFAM" id="SSF54843">
    <property type="entry name" value="Ribosomal protein L22"/>
    <property type="match status" value="1"/>
</dbReference>
<dbReference type="PROSITE" id="PS00464">
    <property type="entry name" value="RIBOSOMAL_L22"/>
    <property type="match status" value="1"/>
</dbReference>
<keyword id="KW-0687">Ribonucleoprotein</keyword>
<keyword id="KW-0689">Ribosomal protein</keyword>
<keyword id="KW-0694">RNA-binding</keyword>
<keyword id="KW-0699">rRNA-binding</keyword>
<evidence type="ECO:0000255" key="1">
    <source>
        <dbReference type="HAMAP-Rule" id="MF_01331"/>
    </source>
</evidence>
<evidence type="ECO:0000305" key="2"/>
<feature type="chain" id="PRO_1000052572" description="Large ribosomal subunit protein uL22">
    <location>
        <begin position="1"/>
        <end position="111"/>
    </location>
</feature>